<accession>A4VP83</accession>
<evidence type="ECO:0000255" key="1">
    <source>
        <dbReference type="HAMAP-Rule" id="MF_00580"/>
    </source>
</evidence>
<name>CH10_STUS1</name>
<keyword id="KW-0143">Chaperone</keyword>
<keyword id="KW-0963">Cytoplasm</keyword>
<keyword id="KW-1185">Reference proteome</keyword>
<comment type="function">
    <text evidence="1">Together with the chaperonin GroEL, plays an essential role in assisting protein folding. The GroEL-GroES system forms a nano-cage that allows encapsulation of the non-native substrate proteins and provides a physical environment optimized to promote and accelerate protein folding. GroES binds to the apical surface of the GroEL ring, thereby capping the opening of the GroEL channel.</text>
</comment>
<comment type="subunit">
    <text evidence="1">Heptamer of 7 subunits arranged in a ring. Interacts with the chaperonin GroEL.</text>
</comment>
<comment type="subcellular location">
    <subcellularLocation>
        <location evidence="1">Cytoplasm</location>
    </subcellularLocation>
</comment>
<comment type="similarity">
    <text evidence="1">Belongs to the GroES chaperonin family.</text>
</comment>
<sequence length="97" mass="10266">MKLRPLHDRVVIRRSEEETKTAGGIVLPGSAAEKPNRGEVVAVGTGRVLDNGEVRAPAVKVGDKVVFGPYSGSNTVKVDGEDLLVMSENEILAVIEA</sequence>
<reference key="1">
    <citation type="journal article" date="2008" name="Proc. Natl. Acad. Sci. U.S.A.">
        <title>Nitrogen fixation island and rhizosphere competence traits in the genome of root-associated Pseudomonas stutzeri A1501.</title>
        <authorList>
            <person name="Yan Y."/>
            <person name="Yang J."/>
            <person name="Dou Y."/>
            <person name="Chen M."/>
            <person name="Ping S."/>
            <person name="Peng J."/>
            <person name="Lu W."/>
            <person name="Zhang W."/>
            <person name="Yao Z."/>
            <person name="Li H."/>
            <person name="Liu W."/>
            <person name="He S."/>
            <person name="Geng L."/>
            <person name="Zhang X."/>
            <person name="Yang F."/>
            <person name="Yu H."/>
            <person name="Zhan Y."/>
            <person name="Li D."/>
            <person name="Lin Z."/>
            <person name="Wang Y."/>
            <person name="Elmerich C."/>
            <person name="Lin M."/>
            <person name="Jin Q."/>
        </authorList>
    </citation>
    <scope>NUCLEOTIDE SEQUENCE [LARGE SCALE GENOMIC DNA]</scope>
    <source>
        <strain>A1501</strain>
    </source>
</reference>
<gene>
    <name evidence="1" type="primary">groES</name>
    <name evidence="1" type="synonym">groS</name>
    <name type="ordered locus">PST_3146</name>
</gene>
<feature type="chain" id="PRO_1000025341" description="Co-chaperonin GroES">
    <location>
        <begin position="1"/>
        <end position="97"/>
    </location>
</feature>
<proteinExistence type="inferred from homology"/>
<organism>
    <name type="scientific">Stutzerimonas stutzeri (strain A1501)</name>
    <name type="common">Pseudomonas stutzeri</name>
    <dbReference type="NCBI Taxonomy" id="379731"/>
    <lineage>
        <taxon>Bacteria</taxon>
        <taxon>Pseudomonadati</taxon>
        <taxon>Pseudomonadota</taxon>
        <taxon>Gammaproteobacteria</taxon>
        <taxon>Pseudomonadales</taxon>
        <taxon>Pseudomonadaceae</taxon>
        <taxon>Stutzerimonas</taxon>
    </lineage>
</organism>
<dbReference type="EMBL" id="CP000304">
    <property type="protein sequence ID" value="ABP80784.1"/>
    <property type="molecule type" value="Genomic_DNA"/>
</dbReference>
<dbReference type="RefSeq" id="WP_011914234.1">
    <property type="nucleotide sequence ID" value="NC_009434.1"/>
</dbReference>
<dbReference type="SMR" id="A4VP83"/>
<dbReference type="KEGG" id="psa:PST_3146"/>
<dbReference type="eggNOG" id="COG0234">
    <property type="taxonomic scope" value="Bacteria"/>
</dbReference>
<dbReference type="HOGENOM" id="CLU_132825_2_0_6"/>
<dbReference type="Proteomes" id="UP000000233">
    <property type="component" value="Chromosome"/>
</dbReference>
<dbReference type="GO" id="GO:0005737">
    <property type="term" value="C:cytoplasm"/>
    <property type="evidence" value="ECO:0007669"/>
    <property type="project" value="UniProtKB-SubCell"/>
</dbReference>
<dbReference type="GO" id="GO:0005524">
    <property type="term" value="F:ATP binding"/>
    <property type="evidence" value="ECO:0007669"/>
    <property type="project" value="InterPro"/>
</dbReference>
<dbReference type="GO" id="GO:0046872">
    <property type="term" value="F:metal ion binding"/>
    <property type="evidence" value="ECO:0007669"/>
    <property type="project" value="TreeGrafter"/>
</dbReference>
<dbReference type="GO" id="GO:0044183">
    <property type="term" value="F:protein folding chaperone"/>
    <property type="evidence" value="ECO:0007669"/>
    <property type="project" value="InterPro"/>
</dbReference>
<dbReference type="GO" id="GO:0051087">
    <property type="term" value="F:protein-folding chaperone binding"/>
    <property type="evidence" value="ECO:0007669"/>
    <property type="project" value="TreeGrafter"/>
</dbReference>
<dbReference type="GO" id="GO:0051082">
    <property type="term" value="F:unfolded protein binding"/>
    <property type="evidence" value="ECO:0007669"/>
    <property type="project" value="TreeGrafter"/>
</dbReference>
<dbReference type="GO" id="GO:0051085">
    <property type="term" value="P:chaperone cofactor-dependent protein refolding"/>
    <property type="evidence" value="ECO:0007669"/>
    <property type="project" value="TreeGrafter"/>
</dbReference>
<dbReference type="CDD" id="cd00320">
    <property type="entry name" value="cpn10"/>
    <property type="match status" value="1"/>
</dbReference>
<dbReference type="FunFam" id="2.30.33.40:FF:000001">
    <property type="entry name" value="10 kDa chaperonin"/>
    <property type="match status" value="1"/>
</dbReference>
<dbReference type="Gene3D" id="2.30.33.40">
    <property type="entry name" value="GroES chaperonin"/>
    <property type="match status" value="1"/>
</dbReference>
<dbReference type="HAMAP" id="MF_00580">
    <property type="entry name" value="CH10"/>
    <property type="match status" value="1"/>
</dbReference>
<dbReference type="InterPro" id="IPR020818">
    <property type="entry name" value="Chaperonin_GroES"/>
</dbReference>
<dbReference type="InterPro" id="IPR037124">
    <property type="entry name" value="Chaperonin_GroES_sf"/>
</dbReference>
<dbReference type="InterPro" id="IPR018369">
    <property type="entry name" value="Chaprnonin_Cpn10_CS"/>
</dbReference>
<dbReference type="InterPro" id="IPR011032">
    <property type="entry name" value="GroES-like_sf"/>
</dbReference>
<dbReference type="NCBIfam" id="NF001527">
    <property type="entry name" value="PRK00364.1-2"/>
    <property type="match status" value="1"/>
</dbReference>
<dbReference type="NCBIfam" id="NF001531">
    <property type="entry name" value="PRK00364.2-2"/>
    <property type="match status" value="1"/>
</dbReference>
<dbReference type="NCBIfam" id="NF001533">
    <property type="entry name" value="PRK00364.2-4"/>
    <property type="match status" value="1"/>
</dbReference>
<dbReference type="PANTHER" id="PTHR10772">
    <property type="entry name" value="10 KDA HEAT SHOCK PROTEIN"/>
    <property type="match status" value="1"/>
</dbReference>
<dbReference type="PANTHER" id="PTHR10772:SF58">
    <property type="entry name" value="CO-CHAPERONIN GROES"/>
    <property type="match status" value="1"/>
</dbReference>
<dbReference type="Pfam" id="PF00166">
    <property type="entry name" value="Cpn10"/>
    <property type="match status" value="1"/>
</dbReference>
<dbReference type="PRINTS" id="PR00297">
    <property type="entry name" value="CHAPERONIN10"/>
</dbReference>
<dbReference type="SMART" id="SM00883">
    <property type="entry name" value="Cpn10"/>
    <property type="match status" value="1"/>
</dbReference>
<dbReference type="SUPFAM" id="SSF50129">
    <property type="entry name" value="GroES-like"/>
    <property type="match status" value="1"/>
</dbReference>
<dbReference type="PROSITE" id="PS00681">
    <property type="entry name" value="CHAPERONINS_CPN10"/>
    <property type="match status" value="1"/>
</dbReference>
<protein>
    <recommendedName>
        <fullName evidence="1">Co-chaperonin GroES</fullName>
    </recommendedName>
    <alternativeName>
        <fullName evidence="1">10 kDa chaperonin</fullName>
    </alternativeName>
    <alternativeName>
        <fullName evidence="1">Chaperonin-10</fullName>
        <shortName evidence="1">Cpn10</shortName>
    </alternativeName>
</protein>